<organism>
    <name type="scientific">Acidovorax sp. (strain JS42)</name>
    <dbReference type="NCBI Taxonomy" id="232721"/>
    <lineage>
        <taxon>Bacteria</taxon>
        <taxon>Pseudomonadati</taxon>
        <taxon>Pseudomonadota</taxon>
        <taxon>Betaproteobacteria</taxon>
        <taxon>Burkholderiales</taxon>
        <taxon>Comamonadaceae</taxon>
        <taxon>Acidovorax</taxon>
    </lineage>
</organism>
<evidence type="ECO:0000250" key="1"/>
<evidence type="ECO:0000255" key="2">
    <source>
        <dbReference type="HAMAP-Rule" id="MF_01057"/>
    </source>
</evidence>
<evidence type="ECO:0000256" key="3">
    <source>
        <dbReference type="SAM" id="MobiDB-lite"/>
    </source>
</evidence>
<gene>
    <name evidence="2" type="primary">trmB</name>
    <name type="ordered locus">Ajs_1981</name>
</gene>
<dbReference type="EC" id="2.1.1.33" evidence="2"/>
<dbReference type="EMBL" id="CP000539">
    <property type="protein sequence ID" value="ABM42157.1"/>
    <property type="molecule type" value="Genomic_DNA"/>
</dbReference>
<dbReference type="SMR" id="A1W7D2"/>
<dbReference type="STRING" id="232721.Ajs_1981"/>
<dbReference type="KEGG" id="ajs:Ajs_1981"/>
<dbReference type="eggNOG" id="COG0220">
    <property type="taxonomic scope" value="Bacteria"/>
</dbReference>
<dbReference type="HOGENOM" id="CLU_050910_0_1_4"/>
<dbReference type="UniPathway" id="UPA00989"/>
<dbReference type="Proteomes" id="UP000000645">
    <property type="component" value="Chromosome"/>
</dbReference>
<dbReference type="GO" id="GO:0043527">
    <property type="term" value="C:tRNA methyltransferase complex"/>
    <property type="evidence" value="ECO:0007669"/>
    <property type="project" value="TreeGrafter"/>
</dbReference>
<dbReference type="GO" id="GO:0008176">
    <property type="term" value="F:tRNA (guanine(46)-N7)-methyltransferase activity"/>
    <property type="evidence" value="ECO:0007669"/>
    <property type="project" value="UniProtKB-UniRule"/>
</dbReference>
<dbReference type="CDD" id="cd02440">
    <property type="entry name" value="AdoMet_MTases"/>
    <property type="match status" value="1"/>
</dbReference>
<dbReference type="FunFam" id="3.40.50.150:FF:000035">
    <property type="entry name" value="tRNA (guanine-N(7)-)-methyltransferase"/>
    <property type="match status" value="1"/>
</dbReference>
<dbReference type="Gene3D" id="3.40.50.150">
    <property type="entry name" value="Vaccinia Virus protein VP39"/>
    <property type="match status" value="1"/>
</dbReference>
<dbReference type="HAMAP" id="MF_01057">
    <property type="entry name" value="tRNA_methyltr_TrmB"/>
    <property type="match status" value="1"/>
</dbReference>
<dbReference type="InterPro" id="IPR029063">
    <property type="entry name" value="SAM-dependent_MTases_sf"/>
</dbReference>
<dbReference type="InterPro" id="IPR003358">
    <property type="entry name" value="tRNA_(Gua-N-7)_MeTrfase_Trmb"/>
</dbReference>
<dbReference type="InterPro" id="IPR055361">
    <property type="entry name" value="tRNA_methyltr_TrmB_bact"/>
</dbReference>
<dbReference type="NCBIfam" id="TIGR00091">
    <property type="entry name" value="tRNA (guanosine(46)-N7)-methyltransferase TrmB"/>
    <property type="match status" value="1"/>
</dbReference>
<dbReference type="PANTHER" id="PTHR23417">
    <property type="entry name" value="3-DEOXY-D-MANNO-OCTULOSONIC-ACID TRANSFERASE/TRNA GUANINE-N 7 - -METHYLTRANSFERASE"/>
    <property type="match status" value="1"/>
</dbReference>
<dbReference type="PANTHER" id="PTHR23417:SF14">
    <property type="entry name" value="PENTACOTRIPEPTIDE-REPEAT REGION OF PRORP DOMAIN-CONTAINING PROTEIN"/>
    <property type="match status" value="1"/>
</dbReference>
<dbReference type="Pfam" id="PF02390">
    <property type="entry name" value="Methyltransf_4"/>
    <property type="match status" value="1"/>
</dbReference>
<dbReference type="SUPFAM" id="SSF53335">
    <property type="entry name" value="S-adenosyl-L-methionine-dependent methyltransferases"/>
    <property type="match status" value="1"/>
</dbReference>
<dbReference type="PROSITE" id="PS51625">
    <property type="entry name" value="SAM_MT_TRMB"/>
    <property type="match status" value="1"/>
</dbReference>
<accession>A1W7D2</accession>
<comment type="function">
    <text evidence="2">Catalyzes the formation of N(7)-methylguanine at position 46 (m7G46) in tRNA.</text>
</comment>
<comment type="catalytic activity">
    <reaction evidence="2">
        <text>guanosine(46) in tRNA + S-adenosyl-L-methionine = N(7)-methylguanosine(46) in tRNA + S-adenosyl-L-homocysteine</text>
        <dbReference type="Rhea" id="RHEA:42708"/>
        <dbReference type="Rhea" id="RHEA-COMP:10188"/>
        <dbReference type="Rhea" id="RHEA-COMP:10189"/>
        <dbReference type="ChEBI" id="CHEBI:57856"/>
        <dbReference type="ChEBI" id="CHEBI:59789"/>
        <dbReference type="ChEBI" id="CHEBI:74269"/>
        <dbReference type="ChEBI" id="CHEBI:74480"/>
        <dbReference type="EC" id="2.1.1.33"/>
    </reaction>
</comment>
<comment type="pathway">
    <text evidence="2">tRNA modification; N(7)-methylguanine-tRNA biosynthesis.</text>
</comment>
<comment type="similarity">
    <text evidence="2">Belongs to the class I-like SAM-binding methyltransferase superfamily. TrmB family.</text>
</comment>
<protein>
    <recommendedName>
        <fullName evidence="2">tRNA (guanine-N(7)-)-methyltransferase</fullName>
        <ecNumber evidence="2">2.1.1.33</ecNumber>
    </recommendedName>
    <alternativeName>
        <fullName evidence="2">tRNA (guanine(46)-N(7))-methyltransferase</fullName>
    </alternativeName>
    <alternativeName>
        <fullName evidence="2">tRNA(m7G46)-methyltransferase</fullName>
    </alternativeName>
</protein>
<name>TRMB_ACISJ</name>
<proteinExistence type="inferred from homology"/>
<reference key="1">
    <citation type="submission" date="2006-12" db="EMBL/GenBank/DDBJ databases">
        <title>Complete sequence of chromosome 1 of Acidovorax sp. JS42.</title>
        <authorList>
            <person name="Copeland A."/>
            <person name="Lucas S."/>
            <person name="Lapidus A."/>
            <person name="Barry K."/>
            <person name="Detter J.C."/>
            <person name="Glavina del Rio T."/>
            <person name="Dalin E."/>
            <person name="Tice H."/>
            <person name="Pitluck S."/>
            <person name="Chertkov O."/>
            <person name="Brettin T."/>
            <person name="Bruce D."/>
            <person name="Han C."/>
            <person name="Tapia R."/>
            <person name="Gilna P."/>
            <person name="Schmutz J."/>
            <person name="Larimer F."/>
            <person name="Land M."/>
            <person name="Hauser L."/>
            <person name="Kyrpides N."/>
            <person name="Kim E."/>
            <person name="Stahl D."/>
            <person name="Richardson P."/>
        </authorList>
    </citation>
    <scope>NUCLEOTIDE SEQUENCE [LARGE SCALE GENOMIC DNA]</scope>
    <source>
        <strain>JS42</strain>
    </source>
</reference>
<sequence length="251" mass="27506">MTQTLSSQDPQAPAAPPMPGAAGSAPADVAHPKGIKSYVRRAGRTTTGQAKALEELGPRYVLDYAPALLDATAAFGRSAPLVLEIGFGMGEATAHIARVRPQDNFLCCEVHEPGVGALLKRIGEQDIHNIRILQHDAVEVLEHMLAPGALDGVHIFFPDPWHKKRHNKRRLIQPPLVAQLAARLKPGGYIHCATDWQPYAEQMLEVLSAEPLLSNTAEGYAPQPDYRPLTKFENRGMRLGHGVWDLVFTRR</sequence>
<keyword id="KW-0489">Methyltransferase</keyword>
<keyword id="KW-0949">S-adenosyl-L-methionine</keyword>
<keyword id="KW-0808">Transferase</keyword>
<keyword id="KW-0819">tRNA processing</keyword>
<feature type="chain" id="PRO_0000288113" description="tRNA (guanine-N(7)-)-methyltransferase">
    <location>
        <begin position="1"/>
        <end position="251"/>
    </location>
</feature>
<feature type="region of interest" description="Disordered" evidence="3">
    <location>
        <begin position="1"/>
        <end position="29"/>
    </location>
</feature>
<feature type="region of interest" description="Interaction with RNA" evidence="2">
    <location>
        <begin position="165"/>
        <end position="170"/>
    </location>
</feature>
<feature type="active site" evidence="1">
    <location>
        <position position="159"/>
    </location>
</feature>
<feature type="binding site" evidence="2">
    <location>
        <position position="84"/>
    </location>
    <ligand>
        <name>S-adenosyl-L-methionine</name>
        <dbReference type="ChEBI" id="CHEBI:59789"/>
    </ligand>
</feature>
<feature type="binding site" evidence="2">
    <location>
        <position position="109"/>
    </location>
    <ligand>
        <name>S-adenosyl-L-methionine</name>
        <dbReference type="ChEBI" id="CHEBI:59789"/>
    </ligand>
</feature>
<feature type="binding site" evidence="2">
    <location>
        <position position="136"/>
    </location>
    <ligand>
        <name>S-adenosyl-L-methionine</name>
        <dbReference type="ChEBI" id="CHEBI:59789"/>
    </ligand>
</feature>
<feature type="binding site" evidence="2">
    <location>
        <position position="159"/>
    </location>
    <ligand>
        <name>S-adenosyl-L-methionine</name>
        <dbReference type="ChEBI" id="CHEBI:59789"/>
    </ligand>
</feature>
<feature type="binding site" evidence="2">
    <location>
        <position position="163"/>
    </location>
    <ligand>
        <name>substrate</name>
    </ligand>
</feature>
<feature type="binding site" evidence="2">
    <location>
        <position position="195"/>
    </location>
    <ligand>
        <name>substrate</name>
    </ligand>
</feature>
<feature type="binding site" evidence="2">
    <location>
        <begin position="230"/>
        <end position="233"/>
    </location>
    <ligand>
        <name>substrate</name>
    </ligand>
</feature>